<organism>
    <name type="scientific">Saccharolobus solfataricus (strain ATCC 35092 / DSM 1617 / JCM 11322 / P2)</name>
    <name type="common">Sulfolobus solfataricus</name>
    <dbReference type="NCBI Taxonomy" id="273057"/>
    <lineage>
        <taxon>Archaea</taxon>
        <taxon>Thermoproteota</taxon>
        <taxon>Thermoprotei</taxon>
        <taxon>Sulfolobales</taxon>
        <taxon>Sulfolobaceae</taxon>
        <taxon>Saccharolobus</taxon>
    </lineage>
</organism>
<name>RS4_SACS2</name>
<proteinExistence type="evidence at protein level"/>
<comment type="function">
    <text evidence="1">One of the primary rRNA binding proteins, it binds directly to 16S rRNA where it nucleates assembly of the body of the 30S subunit.</text>
</comment>
<comment type="function">
    <text evidence="1">With S5 and S12 plays an important role in translational accuracy.</text>
</comment>
<comment type="subunit">
    <text evidence="1">Part of the 30S ribosomal subunit. Contacts protein S5. The interaction surface between S4 and S5 is involved in control of translational fidelity.</text>
</comment>
<comment type="similarity">
    <text evidence="1">Belongs to the universal ribosomal protein uS4 family.</text>
</comment>
<sequence length="181" mass="20748">MGDPKKSRKKWETPGHPWIKERIGYEQELLGKYGLRNKREIWIAQSIIRKFRHQARSLLALPPAERAVREKQLVGKLLKMGLLKKETATVDDILSLTEQDLLERRLQTIVYKKGLSNTIYQARQLITHGHIAVNGKRVTSPGYIVNVDEENLIDYYVTSSFKSRPPVMSQQEGGEIGVKQA</sequence>
<accession>P95987</accession>
<protein>
    <recommendedName>
        <fullName evidence="1">Small ribosomal subunit protein uS4</fullName>
    </recommendedName>
    <alternativeName>
        <fullName evidence="2">30S ribosomal protein S4</fullName>
    </alternativeName>
</protein>
<reference key="1">
    <citation type="journal article" date="1996" name="Mol. Microbiol.">
        <title>Organizational characteristics and information content of an archaeal genome: 156 kb of sequence from Sulfolobus solfataricus P2.</title>
        <authorList>
            <person name="Sensen C.W."/>
            <person name="Klenk H.-P."/>
            <person name="Singh R.K."/>
            <person name="Allard G."/>
            <person name="Chan C.C.-Y."/>
            <person name="Liu Q.Y."/>
            <person name="Penny S.L."/>
            <person name="Young F."/>
            <person name="Schenk M.E."/>
            <person name="Gaasterland T."/>
            <person name="Doolittle W.F."/>
            <person name="Ragan M.A."/>
            <person name="Charlebois R.L."/>
        </authorList>
    </citation>
    <scope>NUCLEOTIDE SEQUENCE [GENOMIC DNA]</scope>
    <source>
        <strain>ATCC 35092 / DSM 1617 / JCM 11322 / P2</strain>
    </source>
</reference>
<reference key="2">
    <citation type="journal article" date="2001" name="Proc. Natl. Acad. Sci. U.S.A.">
        <title>The complete genome of the crenarchaeon Sulfolobus solfataricus P2.</title>
        <authorList>
            <person name="She Q."/>
            <person name="Singh R.K."/>
            <person name="Confalonieri F."/>
            <person name="Zivanovic Y."/>
            <person name="Allard G."/>
            <person name="Awayez M.J."/>
            <person name="Chan-Weiher C.C.-Y."/>
            <person name="Clausen I.G."/>
            <person name="Curtis B.A."/>
            <person name="De Moors A."/>
            <person name="Erauso G."/>
            <person name="Fletcher C."/>
            <person name="Gordon P.M.K."/>
            <person name="Heikamp-de Jong I."/>
            <person name="Jeffries A.C."/>
            <person name="Kozera C.J."/>
            <person name="Medina N."/>
            <person name="Peng X."/>
            <person name="Thi-Ngoc H.P."/>
            <person name="Redder P."/>
            <person name="Schenk M.E."/>
            <person name="Theriault C."/>
            <person name="Tolstrup N."/>
            <person name="Charlebois R.L."/>
            <person name="Doolittle W.F."/>
            <person name="Duguet M."/>
            <person name="Gaasterland T."/>
            <person name="Garrett R.A."/>
            <person name="Ragan M.A."/>
            <person name="Sensen C.W."/>
            <person name="Van der Oost J."/>
        </authorList>
    </citation>
    <scope>NUCLEOTIDE SEQUENCE [LARGE SCALE GENOMIC DNA]</scope>
    <source>
        <strain>ATCC 35092 / DSM 1617 / JCM 11322 / P2</strain>
    </source>
</reference>
<evidence type="ECO:0000255" key="1">
    <source>
        <dbReference type="HAMAP-Rule" id="MF_01306"/>
    </source>
</evidence>
<evidence type="ECO:0000305" key="2"/>
<gene>
    <name evidence="1" type="primary">rps4</name>
    <name evidence="1" type="synonym">rps4Ab</name>
    <name type="ordered locus">SSO0073</name>
    <name type="ORF">C04_049</name>
</gene>
<feature type="chain" id="PRO_0000132521" description="Small ribosomal subunit protein uS4">
    <location>
        <begin position="1"/>
        <end position="181"/>
    </location>
</feature>
<feature type="domain" description="S4 RNA-binding" evidence="1">
    <location>
        <begin position="104"/>
        <end position="172"/>
    </location>
</feature>
<dbReference type="EMBL" id="Y08257">
    <property type="protein sequence ID" value="CAA69529.1"/>
    <property type="molecule type" value="Genomic_DNA"/>
</dbReference>
<dbReference type="EMBL" id="AE006641">
    <property type="protein sequence ID" value="AAK40435.1"/>
    <property type="molecule type" value="Genomic_DNA"/>
</dbReference>
<dbReference type="PIR" id="S75415">
    <property type="entry name" value="S75415"/>
</dbReference>
<dbReference type="RefSeq" id="WP_009988885.1">
    <property type="nucleotide sequence ID" value="NC_002754.1"/>
</dbReference>
<dbReference type="PDB" id="9FHL">
    <property type="method" value="EM"/>
    <property type="resolution" value="2.50 A"/>
    <property type="chains" value="D=1-181"/>
</dbReference>
<dbReference type="PDB" id="9FRA">
    <property type="method" value="EM"/>
    <property type="resolution" value="2.80 A"/>
    <property type="chains" value="D=1-181"/>
</dbReference>
<dbReference type="PDB" id="9FRK">
    <property type="method" value="EM"/>
    <property type="resolution" value="3.00 A"/>
    <property type="chains" value="D=1-181"/>
</dbReference>
<dbReference type="PDB" id="9FRL">
    <property type="method" value="EM"/>
    <property type="resolution" value="2.97 A"/>
    <property type="chains" value="D=1-181"/>
</dbReference>
<dbReference type="PDB" id="9FS6">
    <property type="method" value="EM"/>
    <property type="resolution" value="2.90 A"/>
    <property type="chains" value="D=1-181"/>
</dbReference>
<dbReference type="PDB" id="9FS8">
    <property type="method" value="EM"/>
    <property type="resolution" value="3.70 A"/>
    <property type="chains" value="D=1-181"/>
</dbReference>
<dbReference type="PDB" id="9FSF">
    <property type="method" value="EM"/>
    <property type="resolution" value="2.80 A"/>
    <property type="chains" value="D=1-181"/>
</dbReference>
<dbReference type="PDB" id="9FY0">
    <property type="method" value="EM"/>
    <property type="resolution" value="2.90 A"/>
    <property type="chains" value="D=1-181"/>
</dbReference>
<dbReference type="PDBsum" id="9FHL"/>
<dbReference type="PDBsum" id="9FRA"/>
<dbReference type="PDBsum" id="9FRK"/>
<dbReference type="PDBsum" id="9FRL"/>
<dbReference type="PDBsum" id="9FS6"/>
<dbReference type="PDBsum" id="9FS8"/>
<dbReference type="PDBsum" id="9FSF"/>
<dbReference type="PDBsum" id="9FY0"/>
<dbReference type="EMDB" id="EMD-50445"/>
<dbReference type="EMDB" id="EMD-50709"/>
<dbReference type="EMDB" id="EMD-50716"/>
<dbReference type="EMDB" id="EMD-50717"/>
<dbReference type="EMDB" id="EMD-50724"/>
<dbReference type="EMDB" id="EMD-50725"/>
<dbReference type="EMDB" id="EMD-50727"/>
<dbReference type="EMDB" id="EMD-50854"/>
<dbReference type="SMR" id="P95987"/>
<dbReference type="FunCoup" id="P95987">
    <property type="interactions" value="219"/>
</dbReference>
<dbReference type="STRING" id="273057.SSO0073"/>
<dbReference type="PaxDb" id="273057-SSO0073"/>
<dbReference type="EnsemblBacteria" id="AAK40435">
    <property type="protein sequence ID" value="AAK40435"/>
    <property type="gene ID" value="SSO0073"/>
</dbReference>
<dbReference type="KEGG" id="sso:SSO0073"/>
<dbReference type="PATRIC" id="fig|273057.12.peg.74"/>
<dbReference type="eggNOG" id="arCOG04239">
    <property type="taxonomic scope" value="Archaea"/>
</dbReference>
<dbReference type="HOGENOM" id="CLU_089738_1_1_2"/>
<dbReference type="InParanoid" id="P95987"/>
<dbReference type="PhylomeDB" id="P95987"/>
<dbReference type="Proteomes" id="UP000001974">
    <property type="component" value="Chromosome"/>
</dbReference>
<dbReference type="GO" id="GO:0015935">
    <property type="term" value="C:small ribosomal subunit"/>
    <property type="evidence" value="ECO:0000318"/>
    <property type="project" value="GO_Central"/>
</dbReference>
<dbReference type="GO" id="GO:0019843">
    <property type="term" value="F:rRNA binding"/>
    <property type="evidence" value="ECO:0000318"/>
    <property type="project" value="GO_Central"/>
</dbReference>
<dbReference type="GO" id="GO:0003735">
    <property type="term" value="F:structural constituent of ribosome"/>
    <property type="evidence" value="ECO:0000318"/>
    <property type="project" value="GO_Central"/>
</dbReference>
<dbReference type="GO" id="GO:0042274">
    <property type="term" value="P:ribosomal small subunit biogenesis"/>
    <property type="evidence" value="ECO:0000318"/>
    <property type="project" value="GO_Central"/>
</dbReference>
<dbReference type="GO" id="GO:0006412">
    <property type="term" value="P:translation"/>
    <property type="evidence" value="ECO:0007669"/>
    <property type="project" value="UniProtKB-UniRule"/>
</dbReference>
<dbReference type="CDD" id="cd00165">
    <property type="entry name" value="S4"/>
    <property type="match status" value="1"/>
</dbReference>
<dbReference type="FunFam" id="3.10.290.10:FF:000026">
    <property type="entry name" value="30S ribosomal protein S4"/>
    <property type="match status" value="1"/>
</dbReference>
<dbReference type="Gene3D" id="3.10.290.10">
    <property type="entry name" value="RNA-binding S4 domain"/>
    <property type="match status" value="1"/>
</dbReference>
<dbReference type="HAMAP" id="MF_01306_A">
    <property type="entry name" value="Ribosomal_uS4_A"/>
    <property type="match status" value="1"/>
</dbReference>
<dbReference type="InterPro" id="IPR022801">
    <property type="entry name" value="Ribosomal_uS4"/>
</dbReference>
<dbReference type="InterPro" id="IPR022802">
    <property type="entry name" value="Ribosomal_uS4_arc"/>
</dbReference>
<dbReference type="InterPro" id="IPR018079">
    <property type="entry name" value="Ribosomal_uS4_CS"/>
</dbReference>
<dbReference type="InterPro" id="IPR005710">
    <property type="entry name" value="Ribosomal_uS4_euk/arc"/>
</dbReference>
<dbReference type="InterPro" id="IPR001912">
    <property type="entry name" value="Ribosomal_uS4_N"/>
</dbReference>
<dbReference type="InterPro" id="IPR002942">
    <property type="entry name" value="S4_RNA-bd"/>
</dbReference>
<dbReference type="InterPro" id="IPR036986">
    <property type="entry name" value="S4_RNA-bd_sf"/>
</dbReference>
<dbReference type="NCBIfam" id="NF003139">
    <property type="entry name" value="PRK04051.1"/>
    <property type="match status" value="1"/>
</dbReference>
<dbReference type="NCBIfam" id="TIGR01018">
    <property type="entry name" value="uS4_arch"/>
    <property type="match status" value="1"/>
</dbReference>
<dbReference type="PANTHER" id="PTHR11831">
    <property type="entry name" value="30S 40S RIBOSOMAL PROTEIN"/>
    <property type="match status" value="1"/>
</dbReference>
<dbReference type="PANTHER" id="PTHR11831:SF5">
    <property type="entry name" value="40S RIBOSOMAL PROTEIN S9"/>
    <property type="match status" value="1"/>
</dbReference>
<dbReference type="Pfam" id="PF00163">
    <property type="entry name" value="Ribosomal_S4"/>
    <property type="match status" value="1"/>
</dbReference>
<dbReference type="Pfam" id="PF01479">
    <property type="entry name" value="S4"/>
    <property type="match status" value="1"/>
</dbReference>
<dbReference type="SMART" id="SM01390">
    <property type="entry name" value="Ribosomal_S4"/>
    <property type="match status" value="1"/>
</dbReference>
<dbReference type="SMART" id="SM00363">
    <property type="entry name" value="S4"/>
    <property type="match status" value="1"/>
</dbReference>
<dbReference type="SUPFAM" id="SSF55174">
    <property type="entry name" value="Alpha-L RNA-binding motif"/>
    <property type="match status" value="1"/>
</dbReference>
<dbReference type="PROSITE" id="PS00632">
    <property type="entry name" value="RIBOSOMAL_S4"/>
    <property type="match status" value="1"/>
</dbReference>
<dbReference type="PROSITE" id="PS50889">
    <property type="entry name" value="S4"/>
    <property type="match status" value="1"/>
</dbReference>
<keyword id="KW-0002">3D-structure</keyword>
<keyword id="KW-1185">Reference proteome</keyword>
<keyword id="KW-0687">Ribonucleoprotein</keyword>
<keyword id="KW-0689">Ribosomal protein</keyword>
<keyword id="KW-0694">RNA-binding</keyword>
<keyword id="KW-0699">rRNA-binding</keyword>